<protein>
    <recommendedName>
        <fullName evidence="2">Probable transcription factor At4g00232</fullName>
    </recommendedName>
    <alternativeName>
        <fullName evidence="2">Storekeeper-like protein At4g00232</fullName>
    </alternativeName>
</protein>
<proteinExistence type="inferred from homology"/>
<feature type="chain" id="PRO_0000436986" description="Probable transcription factor At4g00232">
    <location>
        <begin position="1"/>
        <end position="154"/>
    </location>
</feature>
<feature type="region of interest" description="Disordered" evidence="1">
    <location>
        <begin position="1"/>
        <end position="44"/>
    </location>
</feature>
<organism evidence="4">
    <name type="scientific">Arabidopsis thaliana</name>
    <name type="common">Mouse-ear cress</name>
    <dbReference type="NCBI Taxonomy" id="3702"/>
    <lineage>
        <taxon>Eukaryota</taxon>
        <taxon>Viridiplantae</taxon>
        <taxon>Streptophyta</taxon>
        <taxon>Embryophyta</taxon>
        <taxon>Tracheophyta</taxon>
        <taxon>Spermatophyta</taxon>
        <taxon>Magnoliopsida</taxon>
        <taxon>eudicotyledons</taxon>
        <taxon>Gunneridae</taxon>
        <taxon>Pentapetalae</taxon>
        <taxon>rosids</taxon>
        <taxon>malvids</taxon>
        <taxon>Brassicales</taxon>
        <taxon>Brassicaceae</taxon>
        <taxon>Camelineae</taxon>
        <taxon>Arabidopsis</taxon>
    </lineage>
</organism>
<evidence type="ECO:0000256" key="1">
    <source>
        <dbReference type="SAM" id="MobiDB-lite"/>
    </source>
</evidence>
<evidence type="ECO:0000305" key="2"/>
<evidence type="ECO:0000312" key="3">
    <source>
        <dbReference type="Araport" id="AT4G00232"/>
    </source>
</evidence>
<evidence type="ECO:0000312" key="4">
    <source>
        <dbReference type="EMBL" id="ABE65506.1"/>
    </source>
</evidence>
<gene>
    <name evidence="3" type="ordered locus">At4g00232</name>
    <name evidence="2" type="ORF">F6N15</name>
</gene>
<sequence>MDKANTNRSKVCGGSGEAKLTGKKRKNVSAKQSKKDAKKENSQMLKWSSKDEVLVLQGMLDFKSVTGKNPVDDINGAYEFVVHEYISTVIDEDFIEKMKSLKKKLKKKQRIYDKDPSSSEPLYQKSSEWLKMIWGYDVESALEKPRKSKRIIKL</sequence>
<accession>Q3EAE7</accession>
<accession>A0MF44</accession>
<keyword id="KW-1185">Reference proteome</keyword>
<keyword id="KW-0804">Transcription</keyword>
<keyword id="KW-0805">Transcription regulation</keyword>
<name>STKLL_ARATH</name>
<reference key="1">
    <citation type="journal article" date="1999" name="Nature">
        <title>Sequence and analysis of chromosome 4 of the plant Arabidopsis thaliana.</title>
        <authorList>
            <person name="Mayer K.F.X."/>
            <person name="Schueller C."/>
            <person name="Wambutt R."/>
            <person name="Murphy G."/>
            <person name="Volckaert G."/>
            <person name="Pohl T."/>
            <person name="Duesterhoeft A."/>
            <person name="Stiekema W."/>
            <person name="Entian K.-D."/>
            <person name="Terryn N."/>
            <person name="Harris B."/>
            <person name="Ansorge W."/>
            <person name="Brandt P."/>
            <person name="Grivell L.A."/>
            <person name="Rieger M."/>
            <person name="Weichselgartner M."/>
            <person name="de Simone V."/>
            <person name="Obermaier B."/>
            <person name="Mache R."/>
            <person name="Mueller M."/>
            <person name="Kreis M."/>
            <person name="Delseny M."/>
            <person name="Puigdomenech P."/>
            <person name="Watson M."/>
            <person name="Schmidtheini T."/>
            <person name="Reichert B."/>
            <person name="Portetelle D."/>
            <person name="Perez-Alonso M."/>
            <person name="Boutry M."/>
            <person name="Bancroft I."/>
            <person name="Vos P."/>
            <person name="Hoheisel J."/>
            <person name="Zimmermann W."/>
            <person name="Wedler H."/>
            <person name="Ridley P."/>
            <person name="Langham S.-A."/>
            <person name="McCullagh B."/>
            <person name="Bilham L."/>
            <person name="Robben J."/>
            <person name="van der Schueren J."/>
            <person name="Grymonprez B."/>
            <person name="Chuang Y.-J."/>
            <person name="Vandenbussche F."/>
            <person name="Braeken M."/>
            <person name="Weltjens I."/>
            <person name="Voet M."/>
            <person name="Bastiaens I."/>
            <person name="Aert R."/>
            <person name="Defoor E."/>
            <person name="Weitzenegger T."/>
            <person name="Bothe G."/>
            <person name="Ramsperger U."/>
            <person name="Hilbert H."/>
            <person name="Braun M."/>
            <person name="Holzer E."/>
            <person name="Brandt A."/>
            <person name="Peters S."/>
            <person name="van Staveren M."/>
            <person name="Dirkse W."/>
            <person name="Mooijman P."/>
            <person name="Klein Lankhorst R."/>
            <person name="Rose M."/>
            <person name="Hauf J."/>
            <person name="Koetter P."/>
            <person name="Berneiser S."/>
            <person name="Hempel S."/>
            <person name="Feldpausch M."/>
            <person name="Lamberth S."/>
            <person name="Van den Daele H."/>
            <person name="De Keyser A."/>
            <person name="Buysshaert C."/>
            <person name="Gielen J."/>
            <person name="Villarroel R."/>
            <person name="De Clercq R."/>
            <person name="van Montagu M."/>
            <person name="Rogers J."/>
            <person name="Cronin A."/>
            <person name="Quail M.A."/>
            <person name="Bray-Allen S."/>
            <person name="Clark L."/>
            <person name="Doggett J."/>
            <person name="Hall S."/>
            <person name="Kay M."/>
            <person name="Lennard N."/>
            <person name="McLay K."/>
            <person name="Mayes R."/>
            <person name="Pettett A."/>
            <person name="Rajandream M.A."/>
            <person name="Lyne M."/>
            <person name="Benes V."/>
            <person name="Rechmann S."/>
            <person name="Borkova D."/>
            <person name="Bloecker H."/>
            <person name="Scharfe M."/>
            <person name="Grimm M."/>
            <person name="Loehnert T.-H."/>
            <person name="Dose S."/>
            <person name="de Haan M."/>
            <person name="Maarse A.C."/>
            <person name="Schaefer M."/>
            <person name="Mueller-Auer S."/>
            <person name="Gabel C."/>
            <person name="Fuchs M."/>
            <person name="Fartmann B."/>
            <person name="Granderath K."/>
            <person name="Dauner D."/>
            <person name="Herzl A."/>
            <person name="Neumann S."/>
            <person name="Argiriou A."/>
            <person name="Vitale D."/>
            <person name="Liguori R."/>
            <person name="Piravandi E."/>
            <person name="Massenet O."/>
            <person name="Quigley F."/>
            <person name="Clabauld G."/>
            <person name="Muendlein A."/>
            <person name="Felber R."/>
            <person name="Schnabl S."/>
            <person name="Hiller R."/>
            <person name="Schmidt W."/>
            <person name="Lecharny A."/>
            <person name="Aubourg S."/>
            <person name="Chefdor F."/>
            <person name="Cooke R."/>
            <person name="Berger C."/>
            <person name="Monfort A."/>
            <person name="Casacuberta E."/>
            <person name="Gibbons T."/>
            <person name="Weber N."/>
            <person name="Vandenbol M."/>
            <person name="Bargues M."/>
            <person name="Terol J."/>
            <person name="Torres A."/>
            <person name="Perez-Perez A."/>
            <person name="Purnelle B."/>
            <person name="Bent E."/>
            <person name="Johnson S."/>
            <person name="Tacon D."/>
            <person name="Jesse T."/>
            <person name="Heijnen L."/>
            <person name="Schwarz S."/>
            <person name="Scholler P."/>
            <person name="Heber S."/>
            <person name="Francs P."/>
            <person name="Bielke C."/>
            <person name="Frishman D."/>
            <person name="Haase D."/>
            <person name="Lemcke K."/>
            <person name="Mewes H.-W."/>
            <person name="Stocker S."/>
            <person name="Zaccaria P."/>
            <person name="Bevan M."/>
            <person name="Wilson R.K."/>
            <person name="de la Bastide M."/>
            <person name="Habermann K."/>
            <person name="Parnell L."/>
            <person name="Dedhia N."/>
            <person name="Gnoj L."/>
            <person name="Schutz K."/>
            <person name="Huang E."/>
            <person name="Spiegel L."/>
            <person name="Sekhon M."/>
            <person name="Murray J."/>
            <person name="Sheet P."/>
            <person name="Cordes M."/>
            <person name="Abu-Threideh J."/>
            <person name="Stoneking T."/>
            <person name="Kalicki J."/>
            <person name="Graves T."/>
            <person name="Harmon G."/>
            <person name="Edwards J."/>
            <person name="Latreille P."/>
            <person name="Courtney L."/>
            <person name="Cloud J."/>
            <person name="Abbott A."/>
            <person name="Scott K."/>
            <person name="Johnson D."/>
            <person name="Minx P."/>
            <person name="Bentley D."/>
            <person name="Fulton B."/>
            <person name="Miller N."/>
            <person name="Greco T."/>
            <person name="Kemp K."/>
            <person name="Kramer J."/>
            <person name="Fulton L."/>
            <person name="Mardis E."/>
            <person name="Dante M."/>
            <person name="Pepin K."/>
            <person name="Hillier L.W."/>
            <person name="Nelson J."/>
            <person name="Spieth J."/>
            <person name="Ryan E."/>
            <person name="Andrews S."/>
            <person name="Geisel C."/>
            <person name="Layman D."/>
            <person name="Du H."/>
            <person name="Ali J."/>
            <person name="Berghoff A."/>
            <person name="Jones K."/>
            <person name="Drone K."/>
            <person name="Cotton M."/>
            <person name="Joshu C."/>
            <person name="Antonoiu B."/>
            <person name="Zidanic M."/>
            <person name="Strong C."/>
            <person name="Sun H."/>
            <person name="Lamar B."/>
            <person name="Yordan C."/>
            <person name="Ma P."/>
            <person name="Zhong J."/>
            <person name="Preston R."/>
            <person name="Vil D."/>
            <person name="Shekher M."/>
            <person name="Matero A."/>
            <person name="Shah R."/>
            <person name="Swaby I.K."/>
            <person name="O'Shaughnessy A."/>
            <person name="Rodriguez M."/>
            <person name="Hoffman J."/>
            <person name="Till S."/>
            <person name="Granat S."/>
            <person name="Shohdy N."/>
            <person name="Hasegawa A."/>
            <person name="Hameed A."/>
            <person name="Lodhi M."/>
            <person name="Johnson A."/>
            <person name="Chen E."/>
            <person name="Marra M.A."/>
            <person name="Martienssen R."/>
            <person name="McCombie W.R."/>
        </authorList>
    </citation>
    <scope>NUCLEOTIDE SEQUENCE [LARGE SCALE GENOMIC DNA]</scope>
    <source>
        <strain>cv. Columbia</strain>
    </source>
</reference>
<reference key="2">
    <citation type="journal article" date="2017" name="Plant J.">
        <title>Araport11: a complete reannotation of the Arabidopsis thaliana reference genome.</title>
        <authorList>
            <person name="Cheng C.Y."/>
            <person name="Krishnakumar V."/>
            <person name="Chan A.P."/>
            <person name="Thibaud-Nissen F."/>
            <person name="Schobel S."/>
            <person name="Town C.D."/>
        </authorList>
    </citation>
    <scope>GENOME REANNOTATION</scope>
    <source>
        <strain>cv. Columbia</strain>
    </source>
</reference>
<reference key="3">
    <citation type="journal article" date="2006" name="Plant Biotechnol. J.">
        <title>Simultaneous high-throughput recombinational cloning of open reading frames in closed and open configurations.</title>
        <authorList>
            <person name="Underwood B.A."/>
            <person name="Vanderhaeghen R."/>
            <person name="Whitford R."/>
            <person name="Town C.D."/>
            <person name="Hilson P."/>
        </authorList>
    </citation>
    <scope>NUCLEOTIDE SEQUENCE [LARGE SCALE GENOMIC DNA]</scope>
    <source>
        <strain>cv. Columbia</strain>
    </source>
</reference>
<dbReference type="EMBL" id="AF069299">
    <property type="status" value="NOT_ANNOTATED_CDS"/>
    <property type="molecule type" value="Genomic_DNA"/>
</dbReference>
<dbReference type="EMBL" id="CP002687">
    <property type="protein sequence ID" value="AEE81842.1"/>
    <property type="molecule type" value="Genomic_DNA"/>
</dbReference>
<dbReference type="EMBL" id="DQ446788">
    <property type="protein sequence ID" value="ABE65506.1"/>
    <property type="molecule type" value="Genomic_DNA"/>
</dbReference>
<dbReference type="EMBL" id="DQ653169">
    <property type="protein sequence ID" value="ABK28238.1"/>
    <property type="status" value="ALT_SEQ"/>
    <property type="molecule type" value="Genomic_DNA"/>
</dbReference>
<dbReference type="RefSeq" id="NP_567157.1">
    <property type="nucleotide sequence ID" value="NM_116242.2"/>
</dbReference>
<dbReference type="IntAct" id="Q3EAE7">
    <property type="interactions" value="8"/>
</dbReference>
<dbReference type="STRING" id="3702.Q3EAE7"/>
<dbReference type="PaxDb" id="3702-AT4G00232.1"/>
<dbReference type="EnsemblPlants" id="AT4G00232.1">
    <property type="protein sequence ID" value="AT4G00232.1"/>
    <property type="gene ID" value="AT4G00232"/>
</dbReference>
<dbReference type="GeneID" id="826492"/>
<dbReference type="Gramene" id="AT4G00232.1">
    <property type="protein sequence ID" value="AT4G00232.1"/>
    <property type="gene ID" value="AT4G00232"/>
</dbReference>
<dbReference type="KEGG" id="ath:AT4G00232"/>
<dbReference type="Araport" id="AT4G00232"/>
<dbReference type="TAIR" id="AT4G00232"/>
<dbReference type="HOGENOM" id="CLU_1724809_0_0_1"/>
<dbReference type="InParanoid" id="Q3EAE7"/>
<dbReference type="OMA" id="WFENGLI"/>
<dbReference type="PhylomeDB" id="Q3EAE7"/>
<dbReference type="PRO" id="PR:Q3EAE7"/>
<dbReference type="Proteomes" id="UP000006548">
    <property type="component" value="Chromosome 4"/>
</dbReference>
<dbReference type="ExpressionAtlas" id="Q3EAE7">
    <property type="expression patterns" value="baseline and differential"/>
</dbReference>
<dbReference type="InterPro" id="IPR053932">
    <property type="entry name" value="GeBP-like_DBD"/>
</dbReference>
<dbReference type="Pfam" id="PF04504">
    <property type="entry name" value="GeBP-like_DBD"/>
    <property type="match status" value="1"/>
</dbReference>
<comment type="similarity">
    <text evidence="2">Belongs to the GeBP family.</text>
</comment>
<comment type="sequence caution" evidence="2">
    <conflict type="erroneous termination">
        <sequence resource="EMBL-CDS" id="ABK28238"/>
    </conflict>
    <text>Extended C-terminus.</text>
</comment>
<comment type="online information" name="Plant Transcription Factor Database">
    <link uri="https://planttfdb.gao-lab.org/family.php?fam=GeBP#family_intro"/>
</comment>